<accession>Q1CV79</accession>
<feature type="chain" id="PRO_0000301325" description="Phosphoglucosamine mutase">
    <location>
        <begin position="1"/>
        <end position="445"/>
    </location>
</feature>
<feature type="active site" description="Phosphoserine intermediate" evidence="1">
    <location>
        <position position="99"/>
    </location>
</feature>
<feature type="binding site" description="via phosphate group" evidence="1">
    <location>
        <position position="99"/>
    </location>
    <ligand>
        <name>Mg(2+)</name>
        <dbReference type="ChEBI" id="CHEBI:18420"/>
    </ligand>
</feature>
<feature type="binding site" evidence="1">
    <location>
        <position position="242"/>
    </location>
    <ligand>
        <name>Mg(2+)</name>
        <dbReference type="ChEBI" id="CHEBI:18420"/>
    </ligand>
</feature>
<feature type="binding site" evidence="1">
    <location>
        <position position="244"/>
    </location>
    <ligand>
        <name>Mg(2+)</name>
        <dbReference type="ChEBI" id="CHEBI:18420"/>
    </ligand>
</feature>
<feature type="binding site" evidence="1">
    <location>
        <position position="246"/>
    </location>
    <ligand>
        <name>Mg(2+)</name>
        <dbReference type="ChEBI" id="CHEBI:18420"/>
    </ligand>
</feature>
<feature type="modified residue" description="Phosphoserine" evidence="1">
    <location>
        <position position="99"/>
    </location>
</feature>
<protein>
    <recommendedName>
        <fullName evidence="1">Phosphoglucosamine mutase</fullName>
        <ecNumber evidence="1">5.4.2.10</ecNumber>
    </recommendedName>
</protein>
<organism>
    <name type="scientific">Helicobacter pylori (strain HPAG1)</name>
    <dbReference type="NCBI Taxonomy" id="357544"/>
    <lineage>
        <taxon>Bacteria</taxon>
        <taxon>Pseudomonadati</taxon>
        <taxon>Campylobacterota</taxon>
        <taxon>Epsilonproteobacteria</taxon>
        <taxon>Campylobacterales</taxon>
        <taxon>Helicobacteraceae</taxon>
        <taxon>Helicobacter</taxon>
    </lineage>
</organism>
<name>GLMM_HELPH</name>
<evidence type="ECO:0000255" key="1">
    <source>
        <dbReference type="HAMAP-Rule" id="MF_01554"/>
    </source>
</evidence>
<gene>
    <name evidence="1" type="primary">glmM</name>
    <name type="ordered locus">HPAG1_0076</name>
</gene>
<sequence>MKIFGTDGVRGKAGVKLTPMFVMRLGIAAGLYFKKHSQTNKILIGKDTRKSGYMVENALVSALTSIGYNVIQIGPMPTPAIAFLTEDMRCDAGIMISASHNPFEDNGIKFFNSYGYKLKEEEEKAIEEIFHDEGLLHSSYKVGESVGSAKRIDDVIGRYIVHLKHSFPKHLNLQSLRIVLDTANGAAYKVAPVVFSELGADVLVINDEPNGCNINEQCGALHPNQLSQEVKKYRADLGFAFDGDADRLVVVDNLGNIVHGDKLLGVLGVYQKSKNALSSQAIVATNMSNLALKEYLKSQDLELKHCAIGDKFVSECMRLNKANFGGEQSGHIIFSDYAKTGDGLVCALQVSALVLESKQVSSVALNPFELYPQNLVNLNVQKKPPLESLKGYSALLKELDQLEIRHLIRYSGTENKLRILLEAKDEKLLESKMQELKEFFEGHLC</sequence>
<proteinExistence type="inferred from homology"/>
<keyword id="KW-0413">Isomerase</keyword>
<keyword id="KW-0460">Magnesium</keyword>
<keyword id="KW-0479">Metal-binding</keyword>
<keyword id="KW-0597">Phosphoprotein</keyword>
<dbReference type="EC" id="5.4.2.10" evidence="1"/>
<dbReference type="EMBL" id="CP000241">
    <property type="protein sequence ID" value="ABF84143.1"/>
    <property type="molecule type" value="Genomic_DNA"/>
</dbReference>
<dbReference type="RefSeq" id="WP_000688413.1">
    <property type="nucleotide sequence ID" value="NC_008086.1"/>
</dbReference>
<dbReference type="SMR" id="Q1CV79"/>
<dbReference type="KEGG" id="hpa:HPAG1_0076"/>
<dbReference type="HOGENOM" id="CLU_016950_7_0_7"/>
<dbReference type="GO" id="GO:0005829">
    <property type="term" value="C:cytosol"/>
    <property type="evidence" value="ECO:0007669"/>
    <property type="project" value="TreeGrafter"/>
</dbReference>
<dbReference type="GO" id="GO:0000287">
    <property type="term" value="F:magnesium ion binding"/>
    <property type="evidence" value="ECO:0007669"/>
    <property type="project" value="UniProtKB-UniRule"/>
</dbReference>
<dbReference type="GO" id="GO:0008966">
    <property type="term" value="F:phosphoglucosamine mutase activity"/>
    <property type="evidence" value="ECO:0007669"/>
    <property type="project" value="UniProtKB-UniRule"/>
</dbReference>
<dbReference type="GO" id="GO:0004615">
    <property type="term" value="F:phosphomannomutase activity"/>
    <property type="evidence" value="ECO:0007669"/>
    <property type="project" value="TreeGrafter"/>
</dbReference>
<dbReference type="GO" id="GO:0005975">
    <property type="term" value="P:carbohydrate metabolic process"/>
    <property type="evidence" value="ECO:0007669"/>
    <property type="project" value="InterPro"/>
</dbReference>
<dbReference type="GO" id="GO:0009252">
    <property type="term" value="P:peptidoglycan biosynthetic process"/>
    <property type="evidence" value="ECO:0007669"/>
    <property type="project" value="TreeGrafter"/>
</dbReference>
<dbReference type="GO" id="GO:0006048">
    <property type="term" value="P:UDP-N-acetylglucosamine biosynthetic process"/>
    <property type="evidence" value="ECO:0007669"/>
    <property type="project" value="TreeGrafter"/>
</dbReference>
<dbReference type="CDD" id="cd05802">
    <property type="entry name" value="GlmM"/>
    <property type="match status" value="1"/>
</dbReference>
<dbReference type="FunFam" id="3.30.310.50:FF:000013">
    <property type="entry name" value="Phosphoglucosamine mutase"/>
    <property type="match status" value="1"/>
</dbReference>
<dbReference type="FunFam" id="3.40.120.10:FF:000001">
    <property type="entry name" value="Phosphoglucosamine mutase"/>
    <property type="match status" value="1"/>
</dbReference>
<dbReference type="FunFam" id="3.40.120.10:FF:000003">
    <property type="entry name" value="Phosphoglucosamine mutase"/>
    <property type="match status" value="1"/>
</dbReference>
<dbReference type="Gene3D" id="3.40.120.10">
    <property type="entry name" value="Alpha-D-Glucose-1,6-Bisphosphate, subunit A, domain 3"/>
    <property type="match status" value="3"/>
</dbReference>
<dbReference type="Gene3D" id="3.30.310.50">
    <property type="entry name" value="Alpha-D-phosphohexomutase, C-terminal domain"/>
    <property type="match status" value="1"/>
</dbReference>
<dbReference type="HAMAP" id="MF_01554_B">
    <property type="entry name" value="GlmM_B"/>
    <property type="match status" value="1"/>
</dbReference>
<dbReference type="InterPro" id="IPR005844">
    <property type="entry name" value="A-D-PHexomutase_a/b/a-I"/>
</dbReference>
<dbReference type="InterPro" id="IPR016055">
    <property type="entry name" value="A-D-PHexomutase_a/b/a-I/II/III"/>
</dbReference>
<dbReference type="InterPro" id="IPR005845">
    <property type="entry name" value="A-D-PHexomutase_a/b/a-II"/>
</dbReference>
<dbReference type="InterPro" id="IPR005846">
    <property type="entry name" value="A-D-PHexomutase_a/b/a-III"/>
</dbReference>
<dbReference type="InterPro" id="IPR005843">
    <property type="entry name" value="A-D-PHexomutase_C"/>
</dbReference>
<dbReference type="InterPro" id="IPR036900">
    <property type="entry name" value="A-D-PHexomutase_C_sf"/>
</dbReference>
<dbReference type="InterPro" id="IPR016066">
    <property type="entry name" value="A-D-PHexomutase_CS"/>
</dbReference>
<dbReference type="InterPro" id="IPR005841">
    <property type="entry name" value="Alpha-D-phosphohexomutase_SF"/>
</dbReference>
<dbReference type="InterPro" id="IPR006352">
    <property type="entry name" value="GlmM_bact"/>
</dbReference>
<dbReference type="InterPro" id="IPR050060">
    <property type="entry name" value="Phosphoglucosamine_mutase"/>
</dbReference>
<dbReference type="NCBIfam" id="TIGR01455">
    <property type="entry name" value="glmM"/>
    <property type="match status" value="1"/>
</dbReference>
<dbReference type="PANTHER" id="PTHR42946:SF1">
    <property type="entry name" value="PHOSPHOGLUCOMUTASE (ALPHA-D-GLUCOSE-1,6-BISPHOSPHATE-DEPENDENT)"/>
    <property type="match status" value="1"/>
</dbReference>
<dbReference type="PANTHER" id="PTHR42946">
    <property type="entry name" value="PHOSPHOHEXOSE MUTASE"/>
    <property type="match status" value="1"/>
</dbReference>
<dbReference type="Pfam" id="PF02878">
    <property type="entry name" value="PGM_PMM_I"/>
    <property type="match status" value="1"/>
</dbReference>
<dbReference type="Pfam" id="PF02879">
    <property type="entry name" value="PGM_PMM_II"/>
    <property type="match status" value="1"/>
</dbReference>
<dbReference type="Pfam" id="PF02880">
    <property type="entry name" value="PGM_PMM_III"/>
    <property type="match status" value="1"/>
</dbReference>
<dbReference type="Pfam" id="PF00408">
    <property type="entry name" value="PGM_PMM_IV"/>
    <property type="match status" value="1"/>
</dbReference>
<dbReference type="PRINTS" id="PR00509">
    <property type="entry name" value="PGMPMM"/>
</dbReference>
<dbReference type="SUPFAM" id="SSF55957">
    <property type="entry name" value="Phosphoglucomutase, C-terminal domain"/>
    <property type="match status" value="1"/>
</dbReference>
<dbReference type="SUPFAM" id="SSF53738">
    <property type="entry name" value="Phosphoglucomutase, first 3 domains"/>
    <property type="match status" value="3"/>
</dbReference>
<dbReference type="PROSITE" id="PS00710">
    <property type="entry name" value="PGM_PMM"/>
    <property type="match status" value="1"/>
</dbReference>
<comment type="function">
    <text evidence="1">Catalyzes the conversion of glucosamine-6-phosphate to glucosamine-1-phosphate.</text>
</comment>
<comment type="catalytic activity">
    <reaction evidence="1">
        <text>alpha-D-glucosamine 1-phosphate = D-glucosamine 6-phosphate</text>
        <dbReference type="Rhea" id="RHEA:23424"/>
        <dbReference type="ChEBI" id="CHEBI:58516"/>
        <dbReference type="ChEBI" id="CHEBI:58725"/>
        <dbReference type="EC" id="5.4.2.10"/>
    </reaction>
</comment>
<comment type="cofactor">
    <cofactor evidence="1">
        <name>Mg(2+)</name>
        <dbReference type="ChEBI" id="CHEBI:18420"/>
    </cofactor>
    <text evidence="1">Binds 1 Mg(2+) ion per subunit.</text>
</comment>
<comment type="PTM">
    <text evidence="1">Activated by phosphorylation.</text>
</comment>
<comment type="similarity">
    <text evidence="1">Belongs to the phosphohexose mutase family.</text>
</comment>
<reference key="1">
    <citation type="journal article" date="2006" name="Proc. Natl. Acad. Sci. U.S.A.">
        <title>The complete genome sequence of a chronic atrophic gastritis Helicobacter pylori strain: evolution during disease progression.</title>
        <authorList>
            <person name="Oh J.D."/>
            <person name="Kling-Baeckhed H."/>
            <person name="Giannakis M."/>
            <person name="Xu J."/>
            <person name="Fulton R.S."/>
            <person name="Fulton L.A."/>
            <person name="Cordum H.S."/>
            <person name="Wang C."/>
            <person name="Elliott G."/>
            <person name="Edwards J."/>
            <person name="Mardis E.R."/>
            <person name="Engstrand L.G."/>
            <person name="Gordon J.I."/>
        </authorList>
    </citation>
    <scope>NUCLEOTIDE SEQUENCE [LARGE SCALE GENOMIC DNA]</scope>
    <source>
        <strain>HPAG1</strain>
    </source>
</reference>